<proteinExistence type="evidence at protein level"/>
<sequence length="368" mass="41840">MALHRLKGHGANVGNRVGIQLDKDFVLFQGSEQEALAVYLSGILSLRLKETTTIKYIRLHLRGVRRVSSDTQSSLPARTGRKRFCSENEFYSRTWNFFDGYREAPMTVPAGEYKYPFDVVMEGSLPASVEGMKEASISYLFTVEIGRRHGRDITFDKPLRVIRVPDLEPCSHDFALDEVWANKIAYRIGIQNRTVALGTRIDVDYVFAPLLRDMKIAFIESQLLEVRDLSVEPNDGGSAHAARTETIVCSDRYTLGEEYSSKALESYQFSRTLQLPQALGHCVQDTEDMGVRVSHKLKIHVRMHNPDGHESELRLAIPVLIYLSPYYRVWEDSFCGETIPLPETLNPSDECPPAYGMHELDQLYMPQD</sequence>
<name>APYA_EMENI</name>
<accession>Q6SCL4</accession>
<accession>C8VI38</accession>
<accession>Q5B865</accession>
<gene>
    <name type="primary">apyA</name>
    <name type="ORF">AN3265</name>
</gene>
<reference key="1">
    <citation type="journal article" date="2004" name="Mol. Microbiol.">
        <title>A role for creD, a carbon catabolite repression gene from Aspergillus nidulans, in ubiquitination.</title>
        <authorList>
            <person name="Boase N.A."/>
            <person name="Kelly J.M."/>
        </authorList>
    </citation>
    <scope>NUCLEOTIDE SEQUENCE [MRNA]</scope>
    <scope>FUNCTION</scope>
    <scope>INTERACTION WITH HULA</scope>
</reference>
<reference key="2">
    <citation type="journal article" date="2005" name="Nature">
        <title>Sequencing of Aspergillus nidulans and comparative analysis with A. fumigatus and A. oryzae.</title>
        <authorList>
            <person name="Galagan J.E."/>
            <person name="Calvo S.E."/>
            <person name="Cuomo C."/>
            <person name="Ma L.-J."/>
            <person name="Wortman J.R."/>
            <person name="Batzoglou S."/>
            <person name="Lee S.-I."/>
            <person name="Bastuerkmen M."/>
            <person name="Spevak C.C."/>
            <person name="Clutterbuck J."/>
            <person name="Kapitonov V."/>
            <person name="Jurka J."/>
            <person name="Scazzocchio C."/>
            <person name="Farman M.L."/>
            <person name="Butler J."/>
            <person name="Purcell S."/>
            <person name="Harris S."/>
            <person name="Braus G.H."/>
            <person name="Draht O."/>
            <person name="Busch S."/>
            <person name="D'Enfert C."/>
            <person name="Bouchier C."/>
            <person name="Goldman G.H."/>
            <person name="Bell-Pedersen D."/>
            <person name="Griffiths-Jones S."/>
            <person name="Doonan J.H."/>
            <person name="Yu J."/>
            <person name="Vienken K."/>
            <person name="Pain A."/>
            <person name="Freitag M."/>
            <person name="Selker E.U."/>
            <person name="Archer D.B."/>
            <person name="Penalva M.A."/>
            <person name="Oakley B.R."/>
            <person name="Momany M."/>
            <person name="Tanaka T."/>
            <person name="Kumagai T."/>
            <person name="Asai K."/>
            <person name="Machida M."/>
            <person name="Nierman W.C."/>
            <person name="Denning D.W."/>
            <person name="Caddick M.X."/>
            <person name="Hynes M."/>
            <person name="Paoletti M."/>
            <person name="Fischer R."/>
            <person name="Miller B.L."/>
            <person name="Dyer P.S."/>
            <person name="Sachs M.S."/>
            <person name="Osmani S.A."/>
            <person name="Birren B.W."/>
        </authorList>
    </citation>
    <scope>NUCLEOTIDE SEQUENCE [LARGE SCALE GENOMIC DNA]</scope>
    <source>
        <strain>FGSC A4 / ATCC 38163 / CBS 112.46 / NRRL 194 / M139</strain>
    </source>
</reference>
<reference key="3">
    <citation type="journal article" date="2009" name="Fungal Genet. Biol.">
        <title>The 2008 update of the Aspergillus nidulans genome annotation: a community effort.</title>
        <authorList>
            <person name="Wortman J.R."/>
            <person name="Gilsenan J.M."/>
            <person name="Joardar V."/>
            <person name="Deegan J."/>
            <person name="Clutterbuck J."/>
            <person name="Andersen M.R."/>
            <person name="Archer D."/>
            <person name="Bencina M."/>
            <person name="Braus G."/>
            <person name="Coutinho P."/>
            <person name="von Dohren H."/>
            <person name="Doonan J."/>
            <person name="Driessen A.J."/>
            <person name="Durek P."/>
            <person name="Espeso E."/>
            <person name="Fekete E."/>
            <person name="Flipphi M."/>
            <person name="Estrada C.G."/>
            <person name="Geysens S."/>
            <person name="Goldman G."/>
            <person name="de Groot P.W."/>
            <person name="Hansen K."/>
            <person name="Harris S.D."/>
            <person name="Heinekamp T."/>
            <person name="Helmstaedt K."/>
            <person name="Henrissat B."/>
            <person name="Hofmann G."/>
            <person name="Homan T."/>
            <person name="Horio T."/>
            <person name="Horiuchi H."/>
            <person name="James S."/>
            <person name="Jones M."/>
            <person name="Karaffa L."/>
            <person name="Karanyi Z."/>
            <person name="Kato M."/>
            <person name="Keller N."/>
            <person name="Kelly D.E."/>
            <person name="Kiel J.A."/>
            <person name="Kim J.M."/>
            <person name="van der Klei I.J."/>
            <person name="Klis F.M."/>
            <person name="Kovalchuk A."/>
            <person name="Krasevec N."/>
            <person name="Kubicek C.P."/>
            <person name="Liu B."/>
            <person name="Maccabe A."/>
            <person name="Meyer V."/>
            <person name="Mirabito P."/>
            <person name="Miskei M."/>
            <person name="Mos M."/>
            <person name="Mullins J."/>
            <person name="Nelson D.R."/>
            <person name="Nielsen J."/>
            <person name="Oakley B.R."/>
            <person name="Osmani S.A."/>
            <person name="Pakula T."/>
            <person name="Paszewski A."/>
            <person name="Paulsen I."/>
            <person name="Pilsyk S."/>
            <person name="Pocsi I."/>
            <person name="Punt P.J."/>
            <person name="Ram A.F."/>
            <person name="Ren Q."/>
            <person name="Robellet X."/>
            <person name="Robson G."/>
            <person name="Seiboth B."/>
            <person name="van Solingen P."/>
            <person name="Specht T."/>
            <person name="Sun J."/>
            <person name="Taheri-Talesh N."/>
            <person name="Takeshita N."/>
            <person name="Ussery D."/>
            <person name="vanKuyk P.A."/>
            <person name="Visser H."/>
            <person name="van de Vondervoort P.J."/>
            <person name="de Vries R.P."/>
            <person name="Walton J."/>
            <person name="Xiang X."/>
            <person name="Xiong Y."/>
            <person name="Zeng A.P."/>
            <person name="Brandt B.W."/>
            <person name="Cornell M.J."/>
            <person name="van den Hondel C.A."/>
            <person name="Visser J."/>
            <person name="Oliver S.G."/>
            <person name="Turner G."/>
        </authorList>
    </citation>
    <scope>GENOME REANNOTATION</scope>
    <source>
        <strain>FGSC A4 / ATCC 38163 / CBS 112.46 / NRRL 194 / M139</strain>
    </source>
</reference>
<protein>
    <recommendedName>
        <fullName>HECT-type ubiquitin ligase-interacting protein apyA</fullName>
    </recommendedName>
    <alternativeName>
        <fullName>Arrestin and PY motif-containing protein A</fullName>
    </alternativeName>
</protein>
<organism>
    <name type="scientific">Emericella nidulans (strain FGSC A4 / ATCC 38163 / CBS 112.46 / NRRL 194 / M139)</name>
    <name type="common">Aspergillus nidulans</name>
    <dbReference type="NCBI Taxonomy" id="227321"/>
    <lineage>
        <taxon>Eukaryota</taxon>
        <taxon>Fungi</taxon>
        <taxon>Dikarya</taxon>
        <taxon>Ascomycota</taxon>
        <taxon>Pezizomycotina</taxon>
        <taxon>Eurotiomycetes</taxon>
        <taxon>Eurotiomycetidae</taxon>
        <taxon>Eurotiales</taxon>
        <taxon>Aspergillaceae</taxon>
        <taxon>Aspergillus</taxon>
        <taxon>Aspergillus subgen. Nidulantes</taxon>
    </lineage>
</organism>
<keyword id="KW-1185">Reference proteome</keyword>
<keyword id="KW-0833">Ubl conjugation pathway</keyword>
<feature type="chain" id="PRO_0000395694" description="HECT-type ubiquitin ligase-interacting protein apyA">
    <location>
        <begin position="1"/>
        <end position="368"/>
    </location>
</feature>
<comment type="function">
    <text evidence="1">May be involved in signaling by recognizing appropriately phosphorylated substrates via its arrestin domains and then recruit a HECT-type ubiquitin ligase such as hulA, leading to ubiquitination of the substrate, providing a link between ubiquitination and phosphorylation in protein regulation and stability.</text>
</comment>
<comment type="subunit">
    <text evidence="1">Interacts with hulA.</text>
</comment>
<comment type="similarity">
    <text evidence="2">Belongs to the arrestin family.</text>
</comment>
<evidence type="ECO:0000269" key="1">
    <source>
    </source>
</evidence>
<evidence type="ECO:0000305" key="2"/>
<dbReference type="EMBL" id="AY460113">
    <property type="protein sequence ID" value="AAS16263.1"/>
    <property type="molecule type" value="mRNA"/>
</dbReference>
<dbReference type="EMBL" id="AACD01000054">
    <property type="protein sequence ID" value="EAA63166.1"/>
    <property type="molecule type" value="Genomic_DNA"/>
</dbReference>
<dbReference type="EMBL" id="BN001306">
    <property type="protein sequence ID" value="CBF83070.1"/>
    <property type="molecule type" value="Genomic_DNA"/>
</dbReference>
<dbReference type="RefSeq" id="XP_660869.1">
    <property type="nucleotide sequence ID" value="XM_655777.1"/>
</dbReference>
<dbReference type="SMR" id="Q6SCL4"/>
<dbReference type="FunCoup" id="Q6SCL4">
    <property type="interactions" value="78"/>
</dbReference>
<dbReference type="STRING" id="227321.Q6SCL4"/>
<dbReference type="EnsemblFungi" id="CBF83070">
    <property type="protein sequence ID" value="CBF83070"/>
    <property type="gene ID" value="ANIA_03265"/>
</dbReference>
<dbReference type="KEGG" id="ani:ANIA_03265"/>
<dbReference type="eggNOG" id="KOG3780">
    <property type="taxonomic scope" value="Eukaryota"/>
</dbReference>
<dbReference type="HOGENOM" id="CLU_018982_0_1_1"/>
<dbReference type="InParanoid" id="Q6SCL4"/>
<dbReference type="OMA" id="EGRRYMN"/>
<dbReference type="OrthoDB" id="2333384at2759"/>
<dbReference type="Proteomes" id="UP000000560">
    <property type="component" value="Chromosome VI"/>
</dbReference>
<dbReference type="GO" id="GO:0005737">
    <property type="term" value="C:cytoplasm"/>
    <property type="evidence" value="ECO:0000318"/>
    <property type="project" value="GO_Central"/>
</dbReference>
<dbReference type="GO" id="GO:0005829">
    <property type="term" value="C:cytosol"/>
    <property type="evidence" value="ECO:0000318"/>
    <property type="project" value="GO_Central"/>
</dbReference>
<dbReference type="GO" id="GO:0005886">
    <property type="term" value="C:plasma membrane"/>
    <property type="evidence" value="ECO:0000318"/>
    <property type="project" value="GO_Central"/>
</dbReference>
<dbReference type="GO" id="GO:0030674">
    <property type="term" value="F:protein-macromolecule adaptor activity"/>
    <property type="evidence" value="ECO:0000318"/>
    <property type="project" value="GO_Central"/>
</dbReference>
<dbReference type="GO" id="GO:0031625">
    <property type="term" value="F:ubiquitin protein ligase binding"/>
    <property type="evidence" value="ECO:0000318"/>
    <property type="project" value="GO_Central"/>
</dbReference>
<dbReference type="GO" id="GO:0031396">
    <property type="term" value="P:regulation of protein ubiquitination"/>
    <property type="evidence" value="ECO:0000316"/>
    <property type="project" value="UniProtKB"/>
</dbReference>
<dbReference type="GO" id="GO:0009410">
    <property type="term" value="P:response to xenobiotic stimulus"/>
    <property type="evidence" value="ECO:0000315"/>
    <property type="project" value="UniProtKB"/>
</dbReference>
<dbReference type="GO" id="GO:0070086">
    <property type="term" value="P:ubiquitin-dependent endocytosis"/>
    <property type="evidence" value="ECO:0000318"/>
    <property type="project" value="GO_Central"/>
</dbReference>
<dbReference type="Gene3D" id="2.60.40.640">
    <property type="match status" value="1"/>
</dbReference>
<dbReference type="InterPro" id="IPR014752">
    <property type="entry name" value="Arrestin-like_C"/>
</dbReference>
<dbReference type="InterPro" id="IPR011021">
    <property type="entry name" value="Arrestin-like_N"/>
</dbReference>
<dbReference type="InterPro" id="IPR011022">
    <property type="entry name" value="Arrestin_C-like"/>
</dbReference>
<dbReference type="InterPro" id="IPR050357">
    <property type="entry name" value="Arrestin_domain-protein"/>
</dbReference>
<dbReference type="InterPro" id="IPR014756">
    <property type="entry name" value="Ig_E-set"/>
</dbReference>
<dbReference type="PANTHER" id="PTHR11188">
    <property type="entry name" value="ARRESTIN DOMAIN CONTAINING PROTEIN"/>
    <property type="match status" value="1"/>
</dbReference>
<dbReference type="PANTHER" id="PTHR11188:SF17">
    <property type="entry name" value="FI21816P1"/>
    <property type="match status" value="1"/>
</dbReference>
<dbReference type="Pfam" id="PF02752">
    <property type="entry name" value="Arrestin_C"/>
    <property type="match status" value="1"/>
</dbReference>
<dbReference type="Pfam" id="PF00339">
    <property type="entry name" value="Arrestin_N"/>
    <property type="match status" value="1"/>
</dbReference>
<dbReference type="SMART" id="SM01017">
    <property type="entry name" value="Arrestin_C"/>
    <property type="match status" value="1"/>
</dbReference>
<dbReference type="SUPFAM" id="SSF81296">
    <property type="entry name" value="E set domains"/>
    <property type="match status" value="1"/>
</dbReference>